<feature type="initiator methionine" description="Removed">
    <location>
        <position position="1"/>
    </location>
</feature>
<feature type="chain" id="PRO_0000170941" description="Nitric oxide synthase 3">
    <location>
        <begin position="2"/>
        <end position="1205"/>
    </location>
</feature>
<feature type="domain" description="Flavodoxin-like" evidence="7">
    <location>
        <begin position="522"/>
        <end position="705"/>
    </location>
</feature>
<feature type="domain" description="FAD-binding FR-type" evidence="8">
    <location>
        <begin position="758"/>
        <end position="1004"/>
    </location>
</feature>
<feature type="region of interest" description="Disordered" evidence="9">
    <location>
        <begin position="1"/>
        <end position="73"/>
    </location>
</feature>
<feature type="region of interest" description="Interaction with NOSIP" evidence="1">
    <location>
        <begin position="100"/>
        <end position="488"/>
    </location>
</feature>
<feature type="region of interest" description="Calmodulin-binding" evidence="6">
    <location>
        <begin position="492"/>
        <end position="512"/>
    </location>
</feature>
<feature type="region of interest" description="Disordered" evidence="9">
    <location>
        <begin position="820"/>
        <end position="847"/>
    </location>
</feature>
<feature type="compositionally biased region" description="Gly residues" evidence="9">
    <location>
        <begin position="15"/>
        <end position="27"/>
    </location>
</feature>
<feature type="compositionally biased region" description="Pro residues" evidence="9">
    <location>
        <begin position="33"/>
        <end position="47"/>
    </location>
</feature>
<feature type="binding site" evidence="4">
    <location>
        <position position="96"/>
    </location>
    <ligand>
        <name>Zn(2+)</name>
        <dbReference type="ChEBI" id="CHEBI:29105"/>
        <note>ligand shared between homodimeric partners</note>
    </ligand>
</feature>
<feature type="binding site" evidence="4">
    <location>
        <position position="101"/>
    </location>
    <ligand>
        <name>Zn(2+)</name>
        <dbReference type="ChEBI" id="CHEBI:29105"/>
        <note>ligand shared between homodimeric partners</note>
    </ligand>
</feature>
<feature type="binding site" evidence="2">
    <location>
        <position position="104"/>
    </location>
    <ligand>
        <name>(6R)-L-erythro-5,6,7,8-tetrahydrobiopterin</name>
        <dbReference type="ChEBI" id="CHEBI:59560"/>
    </ligand>
</feature>
<feature type="binding site" description="axial binding residue" evidence="2">
    <location>
        <position position="186"/>
    </location>
    <ligand>
        <name>heme b</name>
        <dbReference type="ChEBI" id="CHEBI:60344"/>
    </ligand>
    <ligandPart>
        <name>Fe</name>
        <dbReference type="ChEBI" id="CHEBI:18248"/>
    </ligandPart>
</feature>
<feature type="binding site" evidence="2">
    <location>
        <position position="249"/>
    </location>
    <ligand>
        <name>L-arginine</name>
        <dbReference type="ChEBI" id="CHEBI:32682"/>
    </ligand>
</feature>
<feature type="binding site" evidence="2">
    <location>
        <position position="358"/>
    </location>
    <ligand>
        <name>L-arginine</name>
        <dbReference type="ChEBI" id="CHEBI:32682"/>
    </ligand>
</feature>
<feature type="binding site" evidence="2">
    <location>
        <position position="359"/>
    </location>
    <ligand>
        <name>L-arginine</name>
        <dbReference type="ChEBI" id="CHEBI:32682"/>
    </ligand>
</feature>
<feature type="binding site" evidence="2">
    <location>
        <position position="363"/>
    </location>
    <ligand>
        <name>L-arginine</name>
        <dbReference type="ChEBI" id="CHEBI:32682"/>
    </ligand>
</feature>
<feature type="binding site" evidence="2">
    <location>
        <position position="368"/>
    </location>
    <ligand>
        <name>L-arginine</name>
        <dbReference type="ChEBI" id="CHEBI:32682"/>
    </ligand>
</feature>
<feature type="binding site" evidence="2">
    <location>
        <position position="448"/>
    </location>
    <ligand>
        <name>(6R)-L-erythro-5,6,7,8-tetrahydrobiopterin</name>
        <dbReference type="ChEBI" id="CHEBI:59560"/>
    </ligand>
</feature>
<feature type="binding site" evidence="2">
    <location>
        <position position="449"/>
    </location>
    <ligand>
        <name>(6R)-L-erythro-5,6,7,8-tetrahydrobiopterin</name>
        <dbReference type="ChEBI" id="CHEBI:59560"/>
    </ligand>
</feature>
<feature type="binding site" evidence="2">
    <location>
        <position position="462"/>
    </location>
    <ligand>
        <name>(6R)-L-erythro-5,6,7,8-tetrahydrobiopterin</name>
        <dbReference type="ChEBI" id="CHEBI:59560"/>
    </ligand>
</feature>
<feature type="binding site" evidence="2">
    <location>
        <position position="477"/>
    </location>
    <ligand>
        <name>heme b</name>
        <dbReference type="ChEBI" id="CHEBI:60344"/>
    </ligand>
</feature>
<feature type="binding site" evidence="4">
    <location>
        <position position="528"/>
    </location>
    <ligand>
        <name>FMN</name>
        <dbReference type="ChEBI" id="CHEBI:58210"/>
    </ligand>
</feature>
<feature type="binding site" evidence="4">
    <location>
        <position position="529"/>
    </location>
    <ligand>
        <name>FMN</name>
        <dbReference type="ChEBI" id="CHEBI:58210"/>
    </ligand>
</feature>
<feature type="binding site" evidence="4">
    <location>
        <position position="530"/>
    </location>
    <ligand>
        <name>FMN</name>
        <dbReference type="ChEBI" id="CHEBI:58210"/>
    </ligand>
</feature>
<feature type="binding site" evidence="4">
    <location>
        <position position="532"/>
    </location>
    <ligand>
        <name>FMN</name>
        <dbReference type="ChEBI" id="CHEBI:58210"/>
    </ligand>
</feature>
<feature type="binding site" evidence="4">
    <location>
        <position position="574"/>
    </location>
    <ligand>
        <name>FMN</name>
        <dbReference type="ChEBI" id="CHEBI:58210"/>
    </ligand>
</feature>
<feature type="binding site" evidence="4">
    <location>
        <position position="575"/>
    </location>
    <ligand>
        <name>FMN</name>
        <dbReference type="ChEBI" id="CHEBI:58210"/>
    </ligand>
</feature>
<feature type="binding site" evidence="4">
    <location>
        <position position="656"/>
    </location>
    <ligand>
        <name>FMN</name>
        <dbReference type="ChEBI" id="CHEBI:58210"/>
    </ligand>
</feature>
<feature type="binding site" evidence="4">
    <location>
        <position position="663"/>
    </location>
    <ligand>
        <name>FMN</name>
        <dbReference type="ChEBI" id="CHEBI:58210"/>
    </ligand>
</feature>
<feature type="binding site" evidence="4">
    <location>
        <position position="689"/>
    </location>
    <ligand>
        <name>FMN</name>
        <dbReference type="ChEBI" id="CHEBI:58210"/>
    </ligand>
</feature>
<feature type="binding site" evidence="4">
    <location>
        <position position="693"/>
    </location>
    <ligand>
        <name>FMN</name>
        <dbReference type="ChEBI" id="CHEBI:58210"/>
    </ligand>
</feature>
<feature type="binding site" evidence="3">
    <location>
        <position position="778"/>
    </location>
    <ligand>
        <name>NADP(+)</name>
        <dbReference type="ChEBI" id="CHEBI:58349"/>
    </ligand>
</feature>
<feature type="binding site" evidence="3">
    <location>
        <position position="800"/>
    </location>
    <ligand>
        <name>FAD</name>
        <dbReference type="ChEBI" id="CHEBI:57692"/>
    </ligand>
</feature>
<feature type="binding site" evidence="3">
    <location>
        <position position="940"/>
    </location>
    <ligand>
        <name>FAD</name>
        <dbReference type="ChEBI" id="CHEBI:57692"/>
    </ligand>
</feature>
<feature type="binding site" evidence="3">
    <location>
        <position position="942"/>
    </location>
    <ligand>
        <name>FAD</name>
        <dbReference type="ChEBI" id="CHEBI:57692"/>
    </ligand>
</feature>
<feature type="binding site" evidence="3">
    <location>
        <position position="943"/>
    </location>
    <ligand>
        <name>FAD</name>
        <dbReference type="ChEBI" id="CHEBI:57692"/>
    </ligand>
</feature>
<feature type="binding site" evidence="3">
    <location>
        <position position="958"/>
    </location>
    <ligand>
        <name>FAD</name>
        <dbReference type="ChEBI" id="CHEBI:57692"/>
    </ligand>
</feature>
<feature type="binding site" evidence="3">
    <location>
        <position position="960"/>
    </location>
    <ligand>
        <name>FAD</name>
        <dbReference type="ChEBI" id="CHEBI:57692"/>
    </ligand>
</feature>
<feature type="binding site" evidence="3">
    <location>
        <position position="964"/>
    </location>
    <ligand>
        <name>FAD</name>
        <dbReference type="ChEBI" id="CHEBI:57692"/>
    </ligand>
</feature>
<feature type="binding site" evidence="3">
    <location>
        <position position="977"/>
    </location>
    <ligand>
        <name>FAD</name>
        <dbReference type="ChEBI" id="CHEBI:57692"/>
    </ligand>
</feature>
<feature type="binding site" evidence="3">
    <location>
        <position position="978"/>
    </location>
    <ligand>
        <name>FAD</name>
        <dbReference type="ChEBI" id="CHEBI:57692"/>
    </ligand>
</feature>
<feature type="binding site" evidence="3">
    <location>
        <position position="979"/>
    </location>
    <ligand>
        <name>FAD</name>
        <dbReference type="ChEBI" id="CHEBI:57692"/>
    </ligand>
</feature>
<feature type="binding site" evidence="3">
    <location>
        <position position="1018"/>
    </location>
    <ligand>
        <name>NADP(+)</name>
        <dbReference type="ChEBI" id="CHEBI:58349"/>
    </ligand>
</feature>
<feature type="binding site" evidence="3">
    <location>
        <position position="1051"/>
    </location>
    <ligand>
        <name>NADP(+)</name>
        <dbReference type="ChEBI" id="CHEBI:58349"/>
    </ligand>
</feature>
<feature type="binding site" evidence="3">
    <location>
        <position position="1080"/>
    </location>
    <ligand>
        <name>NADP(+)</name>
        <dbReference type="ChEBI" id="CHEBI:58349"/>
    </ligand>
</feature>
<feature type="binding site" evidence="3">
    <location>
        <position position="1081"/>
    </location>
    <ligand>
        <name>NADP(+)</name>
        <dbReference type="ChEBI" id="CHEBI:58349"/>
    </ligand>
</feature>
<feature type="binding site" evidence="3">
    <location>
        <position position="1087"/>
    </location>
    <ligand>
        <name>NADP(+)</name>
        <dbReference type="ChEBI" id="CHEBI:58349"/>
    </ligand>
</feature>
<feature type="binding site" evidence="3">
    <location>
        <position position="1089"/>
    </location>
    <ligand>
        <name>NADP(+)</name>
        <dbReference type="ChEBI" id="CHEBI:58349"/>
    </ligand>
</feature>
<feature type="binding site" evidence="3">
    <location>
        <position position="1091"/>
    </location>
    <ligand>
        <name>NADP(+)</name>
        <dbReference type="ChEBI" id="CHEBI:58349"/>
    </ligand>
</feature>
<feature type="modified residue" description="Phosphoserine; by CDK5" evidence="2">
    <location>
        <position position="116"/>
    </location>
</feature>
<feature type="modified residue" description="Phosphothreonine; by AMPK and PKA" evidence="12">
    <location>
        <position position="497"/>
    </location>
</feature>
<feature type="modified residue" description="Phosphoserine" evidence="5">
    <location>
        <position position="617"/>
    </location>
</feature>
<feature type="modified residue" description="Phosphoserine" evidence="12">
    <location>
        <position position="635"/>
    </location>
</feature>
<feature type="modified residue" description="Phosphoserine" evidence="2">
    <location>
        <position position="640"/>
    </location>
</feature>
<feature type="modified residue" description="Phosphoserine" evidence="2">
    <location>
        <position position="838"/>
    </location>
</feature>
<feature type="modified residue" description="Phosphothreonine" evidence="5">
    <location>
        <position position="1177"/>
    </location>
</feature>
<feature type="modified residue" description="Phosphoserine; by AMPK, PDPK1 and PKA" evidence="12">
    <location>
        <position position="1179"/>
    </location>
</feature>
<feature type="modified residue" description="Phosphoserine" evidence="5">
    <location>
        <position position="1181"/>
    </location>
</feature>
<feature type="lipid moiety-binding region" description="N-myristoyl glycine" evidence="14">
    <location>
        <position position="2"/>
    </location>
</feature>
<feature type="lipid moiety-binding region" description="S-palmitoyl cysteine" evidence="15">
    <location>
        <position position="15"/>
    </location>
</feature>
<feature type="lipid moiety-binding region" description="S-palmitoyl cysteine" evidence="15">
    <location>
        <position position="26"/>
    </location>
</feature>
<feature type="sequence conflict" description="In Ref. 3; AAA30669." evidence="17" ref="3">
    <original>C</original>
    <variation>R</variation>
    <location>
        <position position="100"/>
    </location>
</feature>
<feature type="sequence conflict" description="In Ref. 3; AAA30669." evidence="17" ref="3">
    <original>Y</original>
    <variation>I</variation>
    <location>
        <position position="165"/>
    </location>
</feature>
<feature type="sequence conflict" description="In Ref. 3; AAA30669." evidence="17" ref="3">
    <original>EHPTLEWFAAL</original>
    <variation>GAPHTGVVRGP</variation>
    <location>
        <begin position="318"/>
        <end position="328"/>
    </location>
</feature>
<feature type="sequence conflict" description="In Ref. 3; AAA30669." evidence="17" ref="3">
    <original>S</original>
    <variation>Y</variation>
    <location>
        <position position="455"/>
    </location>
</feature>
<feature type="sequence conflict" description="In Ref. 3; AAA30669." evidence="17" ref="3">
    <original>T</original>
    <variation>P</variation>
    <location>
        <position position="459"/>
    </location>
</feature>
<feature type="sequence conflict" description="In Ref. 3; AAA30669." evidence="17" ref="3">
    <original>T</original>
    <variation>A</variation>
    <location>
        <position position="741"/>
    </location>
</feature>
<feature type="sequence conflict" description="In Ref. 3; AAA30669." evidence="17" ref="3">
    <original>CP</original>
    <variation>SA</variation>
    <location>
        <begin position="804"/>
        <end position="805"/>
    </location>
</feature>
<feature type="sequence conflict" description="In Ref. 3; AAA30669." evidence="17" ref="3">
    <original>L</original>
    <variation>V</variation>
    <location>
        <position position="857"/>
    </location>
</feature>
<feature type="sequence conflict" description="In Ref. 3; AAA30669." evidence="17" ref="3">
    <original>WF</original>
    <variation>LV</variation>
    <location>
        <begin position="907"/>
        <end position="908"/>
    </location>
</feature>
<feature type="sequence conflict" description="In Ref. 3; AAA30669." evidence="17" ref="3">
    <original>A</original>
    <variation>H</variation>
    <location>
        <position position="1042"/>
    </location>
</feature>
<feature type="strand" evidence="45">
    <location>
        <begin position="67"/>
        <end position="70"/>
    </location>
</feature>
<feature type="strand" evidence="43">
    <location>
        <begin position="72"/>
        <end position="75"/>
    </location>
</feature>
<feature type="turn" evidence="43">
    <location>
        <begin position="76"/>
        <end position="79"/>
    </location>
</feature>
<feature type="strand" evidence="43">
    <location>
        <begin position="80"/>
        <end position="83"/>
    </location>
</feature>
<feature type="helix" evidence="43">
    <location>
        <begin position="86"/>
        <end position="89"/>
    </location>
</feature>
<feature type="strand" evidence="44">
    <location>
        <begin position="98"/>
        <end position="101"/>
    </location>
</feature>
<feature type="turn" evidence="43">
    <location>
        <begin position="109"/>
        <end position="111"/>
    </location>
</feature>
<feature type="strand" evidence="48">
    <location>
        <begin position="117"/>
        <end position="119"/>
    </location>
</feature>
<feature type="helix" evidence="43">
    <location>
        <begin position="122"/>
        <end position="139"/>
    </location>
</feature>
<feature type="helix" evidence="43">
    <location>
        <begin position="146"/>
        <end position="162"/>
    </location>
</feature>
<feature type="helix" evidence="43">
    <location>
        <begin position="169"/>
        <end position="181"/>
    </location>
</feature>
<feature type="helix" evidence="43">
    <location>
        <begin position="189"/>
        <end position="191"/>
    </location>
</feature>
<feature type="strand" evidence="43">
    <location>
        <begin position="196"/>
        <end position="199"/>
    </location>
</feature>
<feature type="helix" evidence="43">
    <location>
        <begin position="206"/>
        <end position="221"/>
    </location>
</feature>
<feature type="helix" evidence="43">
    <location>
        <begin position="222"/>
        <end position="224"/>
    </location>
</feature>
<feature type="strand" evidence="43">
    <location>
        <begin position="229"/>
        <end position="232"/>
    </location>
</feature>
<feature type="strand" evidence="46">
    <location>
        <begin position="238"/>
        <end position="240"/>
    </location>
</feature>
<feature type="strand" evidence="43">
    <location>
        <begin position="247"/>
        <end position="251"/>
    </location>
</feature>
<feature type="strand" evidence="43">
    <location>
        <begin position="255"/>
        <end position="257"/>
    </location>
</feature>
<feature type="strand" evidence="47">
    <location>
        <begin position="259"/>
        <end position="261"/>
    </location>
</feature>
<feature type="strand" evidence="43">
    <location>
        <begin position="263"/>
        <end position="265"/>
    </location>
</feature>
<feature type="helix" evidence="43">
    <location>
        <begin position="267"/>
        <end position="269"/>
    </location>
</feature>
<feature type="helix" evidence="43">
    <location>
        <begin position="270"/>
        <end position="278"/>
    </location>
</feature>
<feature type="strand" evidence="43">
    <location>
        <begin position="286"/>
        <end position="288"/>
    </location>
</feature>
<feature type="strand" evidence="43">
    <location>
        <begin position="293"/>
        <end position="296"/>
    </location>
</feature>
<feature type="strand" evidence="43">
    <location>
        <begin position="303"/>
        <end position="305"/>
    </location>
</feature>
<feature type="helix" evidence="43">
    <location>
        <begin position="309"/>
        <end position="311"/>
    </location>
</feature>
<feature type="strand" evidence="43">
    <location>
        <begin position="314"/>
        <end position="316"/>
    </location>
</feature>
<feature type="helix" evidence="43">
    <location>
        <begin position="323"/>
        <end position="328"/>
    </location>
</feature>
<feature type="strand" evidence="43">
    <location>
        <begin position="331"/>
        <end position="334"/>
    </location>
</feature>
<feature type="strand" evidence="43">
    <location>
        <begin position="342"/>
        <end position="345"/>
    </location>
</feature>
<feature type="strand" evidence="43">
    <location>
        <begin position="348"/>
        <end position="351"/>
    </location>
</feature>
<feature type="helix" evidence="43">
    <location>
        <begin position="361"/>
        <end position="365"/>
    </location>
</feature>
<feature type="helix" evidence="43">
    <location>
        <begin position="367"/>
        <end position="370"/>
    </location>
</feature>
<feature type="turn" evidence="43">
    <location>
        <begin position="372"/>
        <end position="375"/>
    </location>
</feature>
<feature type="helix" evidence="43">
    <location>
        <begin position="378"/>
        <end position="384"/>
    </location>
</feature>
<feature type="helix" evidence="43">
    <location>
        <begin position="392"/>
        <end position="394"/>
    </location>
</feature>
<feature type="helix" evidence="43">
    <location>
        <begin position="396"/>
        <end position="414"/>
    </location>
</feature>
<feature type="helix" evidence="43">
    <location>
        <begin position="422"/>
        <end position="440"/>
    </location>
</feature>
<feature type="helix" evidence="43">
    <location>
        <begin position="447"/>
        <end position="450"/>
    </location>
</feature>
<feature type="strand" evidence="43">
    <location>
        <begin position="453"/>
        <end position="455"/>
    </location>
</feature>
<feature type="helix" evidence="43">
    <location>
        <begin position="456"/>
        <end position="458"/>
    </location>
</feature>
<feature type="helix" evidence="43">
    <location>
        <begin position="460"/>
        <end position="463"/>
    </location>
</feature>
<feature type="strand" evidence="45">
    <location>
        <begin position="468"/>
        <end position="470"/>
    </location>
</feature>
<feature type="strand" evidence="43">
    <location>
        <begin position="472"/>
        <end position="476"/>
    </location>
</feature>
<comment type="function">
    <text evidence="2">Produces nitric oxide (NO) which is implicated in vascular smooth muscle relaxation through a cGMP-mediated signal transduction pathway. NO mediates vascular endothelial growth factor (VEGF)-induced angiogenesis in coronary vessels and promotes blood clotting through the activation of platelets.</text>
</comment>
<comment type="catalytic activity">
    <reaction evidence="2">
        <text>2 L-arginine + 3 NADPH + 4 O2 + H(+) = 2 L-citrulline + 2 nitric oxide + 3 NADP(+) + 4 H2O</text>
        <dbReference type="Rhea" id="RHEA:19897"/>
        <dbReference type="ChEBI" id="CHEBI:15377"/>
        <dbReference type="ChEBI" id="CHEBI:15378"/>
        <dbReference type="ChEBI" id="CHEBI:15379"/>
        <dbReference type="ChEBI" id="CHEBI:16480"/>
        <dbReference type="ChEBI" id="CHEBI:32682"/>
        <dbReference type="ChEBI" id="CHEBI:57743"/>
        <dbReference type="ChEBI" id="CHEBI:57783"/>
        <dbReference type="ChEBI" id="CHEBI:58349"/>
        <dbReference type="EC" id="1.14.13.39"/>
    </reaction>
    <physiologicalReaction direction="left-to-right" evidence="2">
        <dbReference type="Rhea" id="RHEA:19898"/>
    </physiologicalReaction>
</comment>
<comment type="cofactor">
    <cofactor evidence="10 16">
        <name>heme b</name>
        <dbReference type="ChEBI" id="CHEBI:60344"/>
    </cofactor>
</comment>
<comment type="cofactor">
    <cofactor evidence="3">
        <name>FAD</name>
        <dbReference type="ChEBI" id="CHEBI:57692"/>
    </cofactor>
    <text evidence="3">Binds 1 FAD.</text>
</comment>
<comment type="cofactor">
    <cofactor evidence="4">
        <name>FMN</name>
        <dbReference type="ChEBI" id="CHEBI:58210"/>
    </cofactor>
    <text evidence="4">Binds 1 FMN.</text>
</comment>
<comment type="cofactor">
    <cofactor evidence="10 11 16">
        <name>(6R)-L-erythro-5,6,7,8-tetrahydrobiopterin</name>
        <dbReference type="ChEBI" id="CHEBI:59560"/>
    </cofactor>
    <text evidence="18">Tetrahydrobiopterin (BH4). May stabilize the dimeric form of the enzyme.</text>
</comment>
<comment type="activity regulation">
    <text evidence="1">Stimulated by calcium/calmodulin. Inhibited by NOSIP and NOSTRIN (By similarity).</text>
</comment>
<comment type="subunit">
    <text evidence="2 5">Homodimer. Interacts with NOSIP and NOSTRIN (By similarity). Interacts with HSP90AB1 (By similarity). Forms a complex with ASL, ASS1 and SLC7A1; the complex regulates cell-autonomous L-arginine synthesis and citrulline recycling while channeling extracellular L-arginine to nitric oxide synthesis pathway (By similarity).</text>
</comment>
<comment type="subcellular location">
    <subcellularLocation>
        <location evidence="13">Cell membrane</location>
    </subcellularLocation>
    <subcellularLocation>
        <location evidence="13">Membrane</location>
        <location evidence="13">Caveola</location>
    </subcellularLocation>
    <subcellularLocation>
        <location evidence="1">Cytoplasm</location>
        <location evidence="1">Cytoskeleton</location>
    </subcellularLocation>
    <subcellularLocation>
        <location evidence="13">Golgi apparatus</location>
    </subcellularLocation>
    <text evidence="1">Specifically associates with actin cytoskeleton in the G2 phase of the cell cycle; which is favored by interaction with NOSIP and results in a reduced enzymatic activity.</text>
</comment>
<comment type="PTM">
    <text evidence="1">Phosphorylation by AMPK at Ser-1179 in the presence of Ca(2+)-calmodulin (CaM) activates activity. In absence of Ca(2+)-calmodulin, AMPK also phosphorylates Thr-497, resulting in inhibition of activity. Phosphorylation of Ser-116 by CDK5 reduces activity (By similarity).</text>
</comment>
<comment type="similarity">
    <text evidence="17">Belongs to the NOS family.</text>
</comment>
<sequence length="1205" mass="133287">MGNLKSVGQEPGPPCGLGLGLGLGLCGKQGPASPAPEPSRAPAPATPHAPDHSPAPNSPTLTRPPEGPKFPRVKNWELGSITYDTLCAQSQQDGPCTPRCCLGSLVLPRKLQTRPSPGPPPAEQLLSQARDFINQYYSSIKRSGSQAHEERLQEVEAEVASTGTYHLRESELVFGAKQAWRNAPRCVGRIQWGKLQVFDARDCSSAQEMFTYICNHIKYATNRGNLRSAITVFPQRAPGRGDFRIWNSQLVRYAGYRQQDGSVRGDPANVEITELCIQHGWTPGNGRFDVLPLLLQAPDEAPELFVLPPELVLEVPLEHPTLEWFAALGLRWYALPAVSNMLLEIGGLEFSAAPFSGWYMSTEIGTRNLCDPHRYNILEDVAVCMDLDTRTTSSLWKDKAAVEINLAVLHSFQLAKVTIVDHHAATVSFMKHLDNEQKARGGCPADWAWIVPPISGSLTPVFHQEMVNYILSPAFRYQPDPWKGSATKGAGITRKKTFKEVANAVKISASLMGTLMAKRVKATILYASETGRAQSYAQQLGRLFRKAFDPRVLCMDEYDVVSLEHEALVLVVTSTFGNGDPPENGESFAAALMEMSGPYNSSPRPEQHKSYKIRFNSVSCSDPLVSSWRRKRKESSNTDSAGALGTLRFCVFGLGSRAYPHFCAFARAVDTRLEELGGERLLQLGQGDELCGQEEAFRGWAKAAFQASCETFCVGEEAKAAAQDIFSPKRSWKRQRYRLSTQAEGLQLLPGLIHVHRRKMFQATVLSVENLQSSKSTRATILVRLDTAGQEGLQYQPGDHIGICPPNRPGLVEALLSRVEDPPPPTESVAVEQLEKGSPGGPPPSWVRDPRLPPCTLRQALTFFLDITSPPSPRLLRLLSTLAEEPSEQQELETLSQDPRRYEEWKWFRCPTLLEVLEQFPSVALPAPLLLTQLPLLQPRYYSVSSAPNAHPGEVHLTVAVLAYRTQDGLGPLHYGVCSTWLSQLKTGDPVPCFIRGAPSFRLPPDPYVPCILVGPGTGIAPFRGFWQERLHDIESKGLQPAPMTLVFGCRCSQLDHLYRDEVQDAQERGVFGRVLTAFSREPDSPKTYVQDILRTELAAEVHRVLCLERGHMFVCGDVTMATSVLQTVQRILATEGDMELDEAGDVIGVLRDQQRYHEDIFGLTLRTQEVTSRIRTQSFSLQERHLRGAVPWAFDPPGPDTPGP</sequence>
<protein>
    <recommendedName>
        <fullName evidence="17">Nitric oxide synthase 3</fullName>
        <ecNumber evidence="2">1.14.13.39</ecNumber>
    </recommendedName>
    <alternativeName>
        <fullName>Constitutive NOS</fullName>
        <shortName>cNOS</shortName>
    </alternativeName>
    <alternativeName>
        <fullName>EC-NOS</fullName>
    </alternativeName>
    <alternativeName>
        <fullName>NOS type III</fullName>
        <shortName>NOSIII</shortName>
    </alternativeName>
    <alternativeName>
        <fullName evidence="17">Nitric oxide synthase, endothelial</fullName>
        <shortName evidence="17">Endothelial NOS</shortName>
        <shortName evidence="17">eNOS</shortName>
    </alternativeName>
</protein>
<gene>
    <name type="primary">NOS3</name>
</gene>
<reference key="1">
    <citation type="journal article" date="1992" name="Proc. Natl. Acad. Sci. U.S.A.">
        <title>Endothelial nitric oxide synthase: molecular cloning and characterization of a distinct constitutive enzyme isoform.</title>
        <authorList>
            <person name="Lamas S."/>
            <person name="Marsden P.A."/>
            <person name="Li G.K."/>
            <person name="Tempst P."/>
            <person name="Michel T."/>
        </authorList>
    </citation>
    <scope>NUCLEOTIDE SEQUENCE [MRNA]</scope>
</reference>
<reference key="2">
    <citation type="journal article" date="1992" name="J. Clin. Invest.">
        <title>Molecular cloning and characterization of the constitutive bovine aortic endothelial cell nitric oxide synthase.</title>
        <authorList>
            <person name="Nishida K."/>
            <person name="Harrison D.G."/>
            <person name="Navas J.P."/>
            <person name="Fisher A.A."/>
            <person name="Dockery S.P."/>
            <person name="Uematsu M."/>
            <person name="Nerem R.M."/>
            <person name="Alexander R.W."/>
            <person name="Murphy T.J."/>
        </authorList>
    </citation>
    <scope>NUCLEOTIDE SEQUENCE [MRNA]</scope>
</reference>
<reference key="3">
    <citation type="journal article" date="1992" name="J. Biol. Chem.">
        <title>Molecular cloning and expression of a cDNA encoding endothelial cell nitric oxide synthase.</title>
        <authorList>
            <person name="Sessa W.C."/>
            <person name="Harrison J.K."/>
            <person name="Barber C.M."/>
            <person name="Zeng D."/>
            <person name="Durieux M.E."/>
            <person name="D'Angelo D.D."/>
            <person name="Lynch K.R."/>
            <person name="Peach M.J."/>
        </authorList>
    </citation>
    <scope>NUCLEOTIDE SEQUENCE [MRNA]</scope>
    <source>
        <tissue>Aortic endothelium</tissue>
    </source>
</reference>
<reference key="4">
    <citation type="journal article" date="1993" name="J. Biol. Chem.">
        <title>Endothelial nitric oxide synthase. N-terminal myristoylation determines subcellular localization.</title>
        <authorList>
            <person name="Busconi L."/>
            <person name="Michel T."/>
        </authorList>
    </citation>
    <scope>MYRISTOYLATION AT GLY-2</scope>
</reference>
<reference key="5">
    <citation type="journal article" date="1995" name="Proc. Natl. Acad. Sci. U.S.A.">
        <title>Mutagenesis of palmitoylation sites in endothelial nitric oxide synthase identifies a novel motif for dual acylation and subcellular targeting.</title>
        <authorList>
            <person name="Robinson L.J."/>
            <person name="Michel T."/>
        </authorList>
    </citation>
    <scope>PALMITOYLATION AT CYS-15 AND CYS-26</scope>
</reference>
<reference key="6">
    <citation type="journal article" date="2002" name="Am. J. Physiol.">
        <title>Shear stress stimulates phosphorylation of eNOS at Ser(635) by a protein kinase A-dependent mechanism.</title>
        <authorList>
            <person name="Boo Y.C."/>
            <person name="Hwang J."/>
            <person name="Sykes M."/>
            <person name="Michell B.J."/>
            <person name="Kemp B.E."/>
            <person name="Lum H."/>
            <person name="Jo H."/>
        </authorList>
    </citation>
    <scope>PHOSPHORYLATION AT THR-497; SER-635 AND SER-1179</scope>
</reference>
<reference key="7">
    <citation type="journal article" date="2007" name="Am. J. Physiol.">
        <title>Aberrant cytoplasmic sequestration of eNOS in endothelial cells after monocrotaline, hypoxia, and senescence: live-cell caveolar and cytoplasmic NO imaging.</title>
        <authorList>
            <person name="Mukhopadhyay S."/>
            <person name="Xu F."/>
            <person name="Sehgal P.B."/>
        </authorList>
    </citation>
    <scope>SUBCELLULAR LOCATION</scope>
</reference>
<reference evidence="37 38 39 40" key="8">
    <citation type="journal article" date="1998" name="Cell">
        <title>Crystal structure of constitutive endothelial nitric oxide synthase: a paradigm for pterin function involving a novel metal center.</title>
        <authorList>
            <person name="Raman C.S."/>
            <person name="Li H."/>
            <person name="Martasek P."/>
            <person name="Kral V."/>
            <person name="Masters B.S.S."/>
            <person name="Poulos T.L."/>
        </authorList>
    </citation>
    <scope>X-RAY CRYSTALLOGRAPHY (1.9 ANGSTROMS) OF 67-482 IN COMPLEX WITH (6R)-L-ERYTHRO-5,6,7,8-TETRAHYDROBIOPTERIN AND HEME B</scope>
</reference>
<reference evidence="22 28 42" key="9">
    <citation type="journal article" date="2000" name="J. Inorg. Biochem.">
        <title>Mapping the active site polarity in structures of endothelial nitric oxide synthase heme domain complexed with isothioureas.</title>
        <authorList>
            <person name="Li H."/>
            <person name="Raman C.S."/>
            <person name="Martasek P."/>
            <person name="Kral V."/>
            <person name="Masters B.S.S."/>
            <person name="Poulos T.L."/>
        </authorList>
    </citation>
    <scope>X-RAY CRYSTALLOGRAPHY (1.86 ANGSTROMS) OF 67-482 IN COMPLEX WITH (6R)-L-ERYTHRO-5,6,7,8-TETRAHYDROBIOPTERIN AND HEME B</scope>
</reference>
<reference evidence="30 31 33 34 35" key="10">
    <citation type="journal article" date="2001" name="Biochemistry">
        <title>Crystallographic studies on endothelial nitric oxide synthase complexed with nitric oxide and mechanism-based inhibitors.</title>
        <authorList>
            <person name="Li H."/>
            <person name="Raman C.S."/>
            <person name="Martasek P."/>
            <person name="Masters B.S.S."/>
            <person name="Poulos T.L."/>
        </authorList>
    </citation>
    <scope>X-RAY CRYSTALLOGRAPHY (1.93 ANGSTROMS) IN COMPLEX WITH (6R)-L-ERYTHRO-5,6,7,8-TETRAHYDROBIOPTERIN AND HEME B</scope>
</reference>
<reference evidence="19 20 25 29 32 41" key="11">
    <citation type="journal article" date="2001" name="Biochemistry">
        <title>Crystal structure of nitric oxide synthase bound to nitro indazole reveals a novel inactivation mechanism.</title>
        <authorList>
            <person name="Raman C.S."/>
            <person name="Li H."/>
            <person name="Martasek P."/>
            <person name="Southan G."/>
            <person name="Masters B.S.S."/>
            <person name="Poulos T.L."/>
        </authorList>
    </citation>
    <scope>X-RAY CRYSTALLOGRAPHY (1.65 ANGSTROMS) IN COMPLEX WITH (6R)-L-ERYTHRO-5,6,7,8-TETRAHYDROBIOPTERIN AND HEME B</scope>
</reference>
<reference evidence="21 23 24 36" key="12">
    <citation type="journal article" date="2001" name="J. Biol. Chem.">
        <title>Implications for isoform-selective inhibitor design derived from the binding mode of bulky isothioureas to the heme domain of endothelial nitric-oxide synthase.</title>
        <authorList>
            <person name="Raman C.S."/>
            <person name="Li H."/>
            <person name="Martasek P."/>
            <person name="Babu B.R."/>
            <person name="Griffith O.W."/>
            <person name="Southan G."/>
            <person name="Masters B.S.S."/>
            <person name="Poulos T.L."/>
        </authorList>
    </citation>
    <scope>X-RAY CRYSTALLOGRAPHY (1.93 ANGSTROMS) IN COMPLEX WITH (6R)-L-ERYTHRO-5,6,7,8-TETRAHYDROBIOPTERIN AND HEME B</scope>
</reference>
<reference evidence="26 27" key="13">
    <citation type="journal article" date="2001" name="J. Biol. Chem.">
        <title>Structural basis for pterin antagonism in nitric-oxide synthase. Development of novel 4-oxo-pteridine antagonists of (6R)-5,6,7,8-tetrahydrobiopterin.</title>
        <authorList>
            <person name="Kotsonis P."/>
            <person name="Frohlich L.G."/>
            <person name="Raman C.S."/>
            <person name="Li H."/>
            <person name="Berg M."/>
            <person name="Gerwig R."/>
            <person name="Groehn V."/>
            <person name="Kang Y."/>
            <person name="Al-Masoudi N."/>
            <person name="Taghavi-Moghadam S."/>
            <person name="Mohr D."/>
            <person name="Munch U."/>
            <person name="Schnabel J."/>
            <person name="Martasek P."/>
            <person name="Masters B.S.S."/>
            <person name="Strobel H."/>
            <person name="Poulos T."/>
            <person name="Matter H."/>
            <person name="Pfleiderer W."/>
            <person name="Schmidt H.H.H.W."/>
        </authorList>
    </citation>
    <scope>X-RAY CRYSTALLOGRAPHY (2.35 ANGSTROMS) IN COMPLEX WITH HEME B</scope>
</reference>
<name>NOS3_BOVIN</name>
<organism>
    <name type="scientific">Bos taurus</name>
    <name type="common">Bovine</name>
    <dbReference type="NCBI Taxonomy" id="9913"/>
    <lineage>
        <taxon>Eukaryota</taxon>
        <taxon>Metazoa</taxon>
        <taxon>Chordata</taxon>
        <taxon>Craniata</taxon>
        <taxon>Vertebrata</taxon>
        <taxon>Euteleostomi</taxon>
        <taxon>Mammalia</taxon>
        <taxon>Eutheria</taxon>
        <taxon>Laurasiatheria</taxon>
        <taxon>Artiodactyla</taxon>
        <taxon>Ruminantia</taxon>
        <taxon>Pecora</taxon>
        <taxon>Bovidae</taxon>
        <taxon>Bovinae</taxon>
        <taxon>Bos</taxon>
    </lineage>
</organism>
<accession>P29473</accession>
<keyword id="KW-0002">3D-structure</keyword>
<keyword id="KW-0094">Blood coagulation</keyword>
<keyword id="KW-0106">Calcium</keyword>
<keyword id="KW-0112">Calmodulin-binding</keyword>
<keyword id="KW-1003">Cell membrane</keyword>
<keyword id="KW-0963">Cytoplasm</keyword>
<keyword id="KW-0206">Cytoskeleton</keyword>
<keyword id="KW-0274">FAD</keyword>
<keyword id="KW-0285">Flavoprotein</keyword>
<keyword id="KW-0288">FMN</keyword>
<keyword id="KW-0333">Golgi apparatus</keyword>
<keyword id="KW-0349">Heme</keyword>
<keyword id="KW-0356">Hemostasis</keyword>
<keyword id="KW-0408">Iron</keyword>
<keyword id="KW-0449">Lipoprotein</keyword>
<keyword id="KW-0472">Membrane</keyword>
<keyword id="KW-0479">Metal-binding</keyword>
<keyword id="KW-0519">Myristate</keyword>
<keyword id="KW-0521">NADP</keyword>
<keyword id="KW-0560">Oxidoreductase</keyword>
<keyword id="KW-0564">Palmitate</keyword>
<keyword id="KW-0597">Phosphoprotein</keyword>
<keyword id="KW-1185">Reference proteome</keyword>
<keyword id="KW-0862">Zinc</keyword>
<dbReference type="EC" id="1.14.13.39" evidence="2"/>
<dbReference type="EMBL" id="M99057">
    <property type="protein sequence ID" value="AAA30667.1"/>
    <property type="molecule type" value="mRNA"/>
</dbReference>
<dbReference type="EMBL" id="M89952">
    <property type="protein sequence ID" value="AAA30494.1"/>
    <property type="molecule type" value="mRNA"/>
</dbReference>
<dbReference type="EMBL" id="M95674">
    <property type="protein sequence ID" value="AAA30669.1"/>
    <property type="molecule type" value="mRNA"/>
</dbReference>
<dbReference type="PIR" id="A38943">
    <property type="entry name" value="A38943"/>
</dbReference>
<dbReference type="PDB" id="1D0C">
    <property type="method" value="X-ray"/>
    <property type="resolution" value="1.65 A"/>
    <property type="chains" value="A/B=39-482"/>
</dbReference>
<dbReference type="PDB" id="1D0O">
    <property type="method" value="X-ray"/>
    <property type="resolution" value="1.95 A"/>
    <property type="chains" value="A/B=39-482"/>
</dbReference>
<dbReference type="PDB" id="1D1V">
    <property type="method" value="X-ray"/>
    <property type="resolution" value="1.93 A"/>
    <property type="chains" value="A/B=39-482"/>
</dbReference>
<dbReference type="PDB" id="1D1W">
    <property type="method" value="X-ray"/>
    <property type="resolution" value="2.00 A"/>
    <property type="chains" value="A/B=39-482"/>
</dbReference>
<dbReference type="PDB" id="1D1X">
    <property type="method" value="X-ray"/>
    <property type="resolution" value="2.00 A"/>
    <property type="chains" value="A/B=39-482"/>
</dbReference>
<dbReference type="PDB" id="1D1Y">
    <property type="method" value="X-ray"/>
    <property type="resolution" value="2.20 A"/>
    <property type="chains" value="A/B=39-482"/>
</dbReference>
<dbReference type="PDB" id="1DM6">
    <property type="method" value="X-ray"/>
    <property type="resolution" value="1.95 A"/>
    <property type="chains" value="A/B=39-482"/>
</dbReference>
<dbReference type="PDB" id="1DM7">
    <property type="method" value="X-ray"/>
    <property type="resolution" value="2.10 A"/>
    <property type="chains" value="A/B=39-482"/>
</dbReference>
<dbReference type="PDB" id="1DM8">
    <property type="method" value="X-ray"/>
    <property type="resolution" value="2.25 A"/>
    <property type="chains" value="A/B=39-482"/>
</dbReference>
<dbReference type="PDB" id="1DMI">
    <property type="method" value="X-ray"/>
    <property type="resolution" value="2.00 A"/>
    <property type="chains" value="A/B=39-482"/>
</dbReference>
<dbReference type="PDB" id="1DMJ">
    <property type="method" value="X-ray"/>
    <property type="resolution" value="2.35 A"/>
    <property type="chains" value="A/B=39-482"/>
</dbReference>
<dbReference type="PDB" id="1DMK">
    <property type="method" value="X-ray"/>
    <property type="resolution" value="1.90 A"/>
    <property type="chains" value="A/B=39-482"/>
</dbReference>
<dbReference type="PDB" id="1ED4">
    <property type="method" value="X-ray"/>
    <property type="resolution" value="1.86 A"/>
    <property type="chains" value="A/B=39-482"/>
</dbReference>
<dbReference type="PDB" id="1ED5">
    <property type="method" value="X-ray"/>
    <property type="resolution" value="1.80 A"/>
    <property type="chains" value="A/B=39-482"/>
</dbReference>
<dbReference type="PDB" id="1ED6">
    <property type="method" value="X-ray"/>
    <property type="resolution" value="2.05 A"/>
    <property type="chains" value="A/B=39-482"/>
</dbReference>
<dbReference type="PDB" id="1FOI">
    <property type="method" value="X-ray"/>
    <property type="resolution" value="1.93 A"/>
    <property type="chains" value="A/B=39-482"/>
</dbReference>
<dbReference type="PDB" id="1FOJ">
    <property type="method" value="X-ray"/>
    <property type="resolution" value="2.10 A"/>
    <property type="chains" value="A/B=39-482"/>
</dbReference>
<dbReference type="PDB" id="1FOL">
    <property type="method" value="X-ray"/>
    <property type="resolution" value="2.20 A"/>
    <property type="chains" value="A/B=39-482"/>
</dbReference>
<dbReference type="PDB" id="1FOO">
    <property type="method" value="X-ray"/>
    <property type="resolution" value="2.00 A"/>
    <property type="chains" value="A/B=39-482"/>
</dbReference>
<dbReference type="PDB" id="1FOP">
    <property type="method" value="X-ray"/>
    <property type="resolution" value="2.30 A"/>
    <property type="chains" value="A/B=39-482"/>
</dbReference>
<dbReference type="PDB" id="1I83">
    <property type="method" value="X-ray"/>
    <property type="resolution" value="2.00 A"/>
    <property type="chains" value="A/B=39-482"/>
</dbReference>
<dbReference type="PDB" id="1NSE">
    <property type="method" value="X-ray"/>
    <property type="resolution" value="1.90 A"/>
    <property type="chains" value="A/B=39-482"/>
</dbReference>
<dbReference type="PDB" id="1P6L">
    <property type="method" value="X-ray"/>
    <property type="resolution" value="2.35 A"/>
    <property type="chains" value="A/B=67-483"/>
</dbReference>
<dbReference type="PDB" id="1P6M">
    <property type="method" value="X-ray"/>
    <property type="resolution" value="2.27 A"/>
    <property type="chains" value="A/B=67-483"/>
</dbReference>
<dbReference type="PDB" id="1P6N">
    <property type="method" value="X-ray"/>
    <property type="resolution" value="2.50 A"/>
    <property type="chains" value="A/B=67-483"/>
</dbReference>
<dbReference type="PDB" id="1Q2O">
    <property type="method" value="X-ray"/>
    <property type="resolution" value="1.74 A"/>
    <property type="chains" value="A/B=67-482"/>
</dbReference>
<dbReference type="PDB" id="1RS8">
    <property type="method" value="X-ray"/>
    <property type="resolution" value="2.30 A"/>
    <property type="chains" value="A/B=67-482"/>
</dbReference>
<dbReference type="PDB" id="1RS9">
    <property type="method" value="X-ray"/>
    <property type="resolution" value="2.22 A"/>
    <property type="chains" value="A/B=67-482"/>
</dbReference>
<dbReference type="PDB" id="1ZZS">
    <property type="method" value="X-ray"/>
    <property type="resolution" value="1.85 A"/>
    <property type="chains" value="A/B=67-482"/>
</dbReference>
<dbReference type="PDB" id="1ZZT">
    <property type="method" value="X-ray"/>
    <property type="resolution" value="2.14 A"/>
    <property type="chains" value="A/B=67-482"/>
</dbReference>
<dbReference type="PDB" id="2G6O">
    <property type="method" value="X-ray"/>
    <property type="resolution" value="1.90 A"/>
    <property type="chains" value="A/B=67-482"/>
</dbReference>
<dbReference type="PDB" id="2HX2">
    <property type="method" value="X-ray"/>
    <property type="resolution" value="1.95 A"/>
    <property type="chains" value="A/B=67-482"/>
</dbReference>
<dbReference type="PDB" id="2NSE">
    <property type="method" value="X-ray"/>
    <property type="resolution" value="2.34 A"/>
    <property type="chains" value="A/B=39-482"/>
</dbReference>
<dbReference type="PDB" id="3DQS">
    <property type="method" value="X-ray"/>
    <property type="resolution" value="2.03 A"/>
    <property type="chains" value="A/B=67-482"/>
</dbReference>
<dbReference type="PDB" id="3DQT">
    <property type="method" value="X-ray"/>
    <property type="resolution" value="2.54 A"/>
    <property type="chains" value="A/B=67-482"/>
</dbReference>
<dbReference type="PDB" id="3E7S">
    <property type="method" value="X-ray"/>
    <property type="resolution" value="2.50 A"/>
    <property type="chains" value="A/B=57-487"/>
</dbReference>
<dbReference type="PDB" id="3JWW">
    <property type="method" value="X-ray"/>
    <property type="resolution" value="2.20 A"/>
    <property type="chains" value="A/B=39-482"/>
</dbReference>
<dbReference type="PDB" id="3JWX">
    <property type="method" value="X-ray"/>
    <property type="resolution" value="2.00 A"/>
    <property type="chains" value="A/B=39-482"/>
</dbReference>
<dbReference type="PDB" id="3JWY">
    <property type="method" value="X-ray"/>
    <property type="resolution" value="2.24 A"/>
    <property type="chains" value="A/B=39-482"/>
</dbReference>
<dbReference type="PDB" id="3JWZ">
    <property type="method" value="X-ray"/>
    <property type="resolution" value="2.40 A"/>
    <property type="chains" value="A/B=39-482"/>
</dbReference>
<dbReference type="PDB" id="3N5P">
    <property type="method" value="X-ray"/>
    <property type="resolution" value="2.39 A"/>
    <property type="chains" value="A/B=39-482"/>
</dbReference>
<dbReference type="PDB" id="3N5Q">
    <property type="method" value="X-ray"/>
    <property type="resolution" value="2.90 A"/>
    <property type="chains" value="A/B=39-482"/>
</dbReference>
<dbReference type="PDB" id="3N5R">
    <property type="method" value="X-ray"/>
    <property type="resolution" value="2.57 A"/>
    <property type="chains" value="A/B=39-482"/>
</dbReference>
<dbReference type="PDB" id="3N5S">
    <property type="method" value="X-ray"/>
    <property type="resolution" value="2.18 A"/>
    <property type="chains" value="A/B=39-482"/>
</dbReference>
<dbReference type="PDB" id="3N5T">
    <property type="method" value="X-ray"/>
    <property type="resolution" value="2.52 A"/>
    <property type="chains" value="A/B=39-482"/>
</dbReference>
<dbReference type="PDB" id="3NLD">
    <property type="method" value="X-ray"/>
    <property type="resolution" value="2.28 A"/>
    <property type="chains" value="A/B=39-482"/>
</dbReference>
<dbReference type="PDB" id="3NLE">
    <property type="method" value="X-ray"/>
    <property type="resolution" value="1.95 A"/>
    <property type="chains" value="A/B=39-482"/>
</dbReference>
<dbReference type="PDB" id="3NLF">
    <property type="method" value="X-ray"/>
    <property type="resolution" value="2.32 A"/>
    <property type="chains" value="A/B=39-482"/>
</dbReference>
<dbReference type="PDB" id="3NLG">
    <property type="method" value="X-ray"/>
    <property type="resolution" value="2.38 A"/>
    <property type="chains" value="A/B=39-482"/>
</dbReference>
<dbReference type="PDB" id="3NLH">
    <property type="method" value="X-ray"/>
    <property type="resolution" value="2.10 A"/>
    <property type="chains" value="A/B=39-482"/>
</dbReference>
<dbReference type="PDB" id="3NLI">
    <property type="method" value="X-ray"/>
    <property type="resolution" value="1.98 A"/>
    <property type="chains" value="A/B=39-482"/>
</dbReference>
<dbReference type="PDB" id="3NLT">
    <property type="method" value="X-ray"/>
    <property type="resolution" value="2.74 A"/>
    <property type="chains" value="A/B=39-482"/>
</dbReference>
<dbReference type="PDB" id="3NLU">
    <property type="method" value="X-ray"/>
    <property type="resolution" value="2.65 A"/>
    <property type="chains" value="A/B=39-482"/>
</dbReference>
<dbReference type="PDB" id="3NSE">
    <property type="method" value="X-ray"/>
    <property type="resolution" value="2.10 A"/>
    <property type="chains" value="A/B=39-482"/>
</dbReference>
<dbReference type="PDB" id="3PNH">
    <property type="method" value="X-ray"/>
    <property type="resolution" value="1.93 A"/>
    <property type="chains" value="A/B=67-482"/>
</dbReference>
<dbReference type="PDB" id="3RQO">
    <property type="method" value="X-ray"/>
    <property type="resolution" value="2.08 A"/>
    <property type="chains" value="A/B=40-482"/>
</dbReference>
<dbReference type="PDB" id="3RQP">
    <property type="method" value="X-ray"/>
    <property type="resolution" value="2.35 A"/>
    <property type="chains" value="A/B=40-482"/>
</dbReference>
<dbReference type="PDB" id="4C3A">
    <property type="method" value="X-ray"/>
    <property type="resolution" value="2.20 A"/>
    <property type="chains" value="A/B=40-482"/>
</dbReference>
<dbReference type="PDB" id="4CAR">
    <property type="method" value="X-ray"/>
    <property type="resolution" value="2.05 A"/>
    <property type="chains" value="A/B=40-482"/>
</dbReference>
<dbReference type="PDB" id="4CFT">
    <property type="method" value="X-ray"/>
    <property type="resolution" value="1.79 A"/>
    <property type="chains" value="A/B=40-482"/>
</dbReference>
<dbReference type="PDB" id="4CTY">
    <property type="method" value="X-ray"/>
    <property type="resolution" value="2.30 A"/>
    <property type="chains" value="A/B=40-482"/>
</dbReference>
<dbReference type="PDB" id="4CTZ">
    <property type="method" value="X-ray"/>
    <property type="resolution" value="2.01 A"/>
    <property type="chains" value="A/B=40-482"/>
</dbReference>
<dbReference type="PDB" id="4CU0">
    <property type="method" value="X-ray"/>
    <property type="resolution" value="2.08 A"/>
    <property type="chains" value="A/B=40-482"/>
</dbReference>
<dbReference type="PDB" id="4CU1">
    <property type="method" value="X-ray"/>
    <property type="resolution" value="1.89 A"/>
    <property type="chains" value="A/B=40-482"/>
</dbReference>
<dbReference type="PDB" id="4CUL">
    <property type="method" value="X-ray"/>
    <property type="resolution" value="2.23 A"/>
    <property type="chains" value="A/B=40-482"/>
</dbReference>
<dbReference type="PDB" id="4CUM">
    <property type="method" value="X-ray"/>
    <property type="resolution" value="2.33 A"/>
    <property type="chains" value="A/B=40-482"/>
</dbReference>
<dbReference type="PDB" id="4CUN">
    <property type="method" value="X-ray"/>
    <property type="resolution" value="2.48 A"/>
    <property type="chains" value="A/B=40-482"/>
</dbReference>
<dbReference type="PDB" id="4CVG">
    <property type="method" value="X-ray"/>
    <property type="resolution" value="2.31 A"/>
    <property type="chains" value="A/B=40-482"/>
</dbReference>
<dbReference type="PDB" id="4CWV">
    <property type="method" value="X-ray"/>
    <property type="resolution" value="2.34 A"/>
    <property type="chains" value="A/B=40-482"/>
</dbReference>
<dbReference type="PDB" id="4CWW">
    <property type="method" value="X-ray"/>
    <property type="resolution" value="2.16 A"/>
    <property type="chains" value="A/B=40-482"/>
</dbReference>
<dbReference type="PDB" id="4CWX">
    <property type="method" value="X-ray"/>
    <property type="resolution" value="2.15 A"/>
    <property type="chains" value="A/B=40-482"/>
</dbReference>
<dbReference type="PDB" id="4CWY">
    <property type="method" value="X-ray"/>
    <property type="resolution" value="2.15 A"/>
    <property type="chains" value="A/B=40-482"/>
</dbReference>
<dbReference type="PDB" id="4CWZ">
    <property type="method" value="X-ray"/>
    <property type="resolution" value="2.08 A"/>
    <property type="chains" value="A/B=40-482"/>
</dbReference>
<dbReference type="PDB" id="4CX0">
    <property type="method" value="X-ray"/>
    <property type="resolution" value="2.20 A"/>
    <property type="chains" value="A/B=40-482"/>
</dbReference>
<dbReference type="PDB" id="4CX1">
    <property type="method" value="X-ray"/>
    <property type="resolution" value="2.13 A"/>
    <property type="chains" value="A/B=40-482"/>
</dbReference>
<dbReference type="PDB" id="4CX2">
    <property type="method" value="X-ray"/>
    <property type="resolution" value="2.04 A"/>
    <property type="chains" value="A/B=40-482"/>
</dbReference>
<dbReference type="PDB" id="4D33">
    <property type="method" value="X-ray"/>
    <property type="resolution" value="2.09 A"/>
    <property type="chains" value="A/B=40-482"/>
</dbReference>
<dbReference type="PDB" id="4D34">
    <property type="method" value="X-ray"/>
    <property type="resolution" value="2.25 A"/>
    <property type="chains" value="A/B=40-482"/>
</dbReference>
<dbReference type="PDB" id="4D35">
    <property type="method" value="X-ray"/>
    <property type="resolution" value="2.18 A"/>
    <property type="chains" value="A/B=40-482"/>
</dbReference>
<dbReference type="PDB" id="4D36">
    <property type="method" value="X-ray"/>
    <property type="resolution" value="2.05 A"/>
    <property type="chains" value="A/B=40-482"/>
</dbReference>
<dbReference type="PDB" id="4D37">
    <property type="method" value="X-ray"/>
    <property type="resolution" value="2.10 A"/>
    <property type="chains" value="A/B=40-482"/>
</dbReference>
<dbReference type="PDB" id="4D38">
    <property type="method" value="X-ray"/>
    <property type="resolution" value="2.30 A"/>
    <property type="chains" value="A/B=40-482"/>
</dbReference>
<dbReference type="PDB" id="4D39">
    <property type="method" value="X-ray"/>
    <property type="resolution" value="2.00 A"/>
    <property type="chains" value="A/B=40-482"/>
</dbReference>
<dbReference type="PDB" id="4D3A">
    <property type="method" value="X-ray"/>
    <property type="resolution" value="2.25 A"/>
    <property type="chains" value="A/B=40-482"/>
</dbReference>
<dbReference type="PDB" id="4IMX">
    <property type="method" value="X-ray"/>
    <property type="resolution" value="2.25 A"/>
    <property type="chains" value="A/B=40-482"/>
</dbReference>
<dbReference type="PDB" id="4JSK">
    <property type="method" value="X-ray"/>
    <property type="resolution" value="2.28 A"/>
    <property type="chains" value="A/B=40-482"/>
</dbReference>
<dbReference type="PDB" id="4JSL">
    <property type="method" value="X-ray"/>
    <property type="resolution" value="2.04 A"/>
    <property type="chains" value="A/B=40-482"/>
</dbReference>
<dbReference type="PDB" id="4JSM">
    <property type="method" value="X-ray"/>
    <property type="resolution" value="2.25 A"/>
    <property type="chains" value="A/B=40-482"/>
</dbReference>
<dbReference type="PDB" id="4K5H">
    <property type="method" value="X-ray"/>
    <property type="resolution" value="2.25 A"/>
    <property type="chains" value="A/B=40-482"/>
</dbReference>
<dbReference type="PDB" id="4K5I">
    <property type="method" value="X-ray"/>
    <property type="resolution" value="2.08 A"/>
    <property type="chains" value="A/B=40-482"/>
</dbReference>
<dbReference type="PDB" id="4K5J">
    <property type="method" value="X-ray"/>
    <property type="resolution" value="2.36 A"/>
    <property type="chains" value="A/B=40-482"/>
</dbReference>
<dbReference type="PDB" id="4K5K">
    <property type="method" value="X-ray"/>
    <property type="resolution" value="2.00 A"/>
    <property type="chains" value="A/B=40-482"/>
</dbReference>
<dbReference type="PDB" id="4KCP">
    <property type="method" value="X-ray"/>
    <property type="resolution" value="2.07 A"/>
    <property type="chains" value="A/B=40-482"/>
</dbReference>
<dbReference type="PDB" id="4KCQ">
    <property type="method" value="X-ray"/>
    <property type="resolution" value="2.03 A"/>
    <property type="chains" value="A/B=40-482"/>
</dbReference>
<dbReference type="PDB" id="4KCR">
    <property type="method" value="X-ray"/>
    <property type="resolution" value="2.09 A"/>
    <property type="chains" value="A/B=40-482"/>
</dbReference>
<dbReference type="PDB" id="4KCS">
    <property type="method" value="X-ray"/>
    <property type="resolution" value="2.05 A"/>
    <property type="chains" value="A/B=40-482"/>
</dbReference>
<dbReference type="PDB" id="4LUW">
    <property type="method" value="X-ray"/>
    <property type="resolution" value="2.25 A"/>
    <property type="chains" value="A/B=41-482"/>
</dbReference>
<dbReference type="PDB" id="4NSE">
    <property type="method" value="X-ray"/>
    <property type="resolution" value="1.95 A"/>
    <property type="chains" value="A/B=39-482"/>
</dbReference>
<dbReference type="PDB" id="4UH7">
    <property type="method" value="X-ray"/>
    <property type="resolution" value="2.23 A"/>
    <property type="chains" value="A/B=40-482"/>
</dbReference>
<dbReference type="PDB" id="4UH8">
    <property type="method" value="X-ray"/>
    <property type="resolution" value="2.30 A"/>
    <property type="chains" value="A/B=40-482"/>
</dbReference>
<dbReference type="PDB" id="4UH9">
    <property type="method" value="X-ray"/>
    <property type="resolution" value="2.14 A"/>
    <property type="chains" value="A/B=40-482"/>
</dbReference>
<dbReference type="PDB" id="4UHA">
    <property type="method" value="X-ray"/>
    <property type="resolution" value="2.20 A"/>
    <property type="chains" value="A/B=40-482"/>
</dbReference>
<dbReference type="PDB" id="4UPQ">
    <property type="method" value="X-ray"/>
    <property type="resolution" value="2.03 A"/>
    <property type="chains" value="A/B=40-482"/>
</dbReference>
<dbReference type="PDB" id="4UPR">
    <property type="method" value="X-ray"/>
    <property type="resolution" value="1.93 A"/>
    <property type="chains" value="A/B=40-482"/>
</dbReference>
<dbReference type="PDB" id="4UPS">
    <property type="method" value="X-ray"/>
    <property type="resolution" value="1.95 A"/>
    <property type="chains" value="A/B=40-482"/>
</dbReference>
<dbReference type="PDB" id="4UPT">
    <property type="method" value="X-ray"/>
    <property type="resolution" value="2.20 A"/>
    <property type="chains" value="A/B=40-482"/>
</dbReference>
<dbReference type="PDB" id="5ADJ">
    <property type="method" value="X-ray"/>
    <property type="resolution" value="2.22 A"/>
    <property type="chains" value="A/B=40-482"/>
</dbReference>
<dbReference type="PDB" id="5ADK">
    <property type="method" value="X-ray"/>
    <property type="resolution" value="1.80 A"/>
    <property type="chains" value="A/B=40-482"/>
</dbReference>
<dbReference type="PDB" id="5ADL">
    <property type="method" value="X-ray"/>
    <property type="resolution" value="2.21 A"/>
    <property type="chains" value="A/B=40-482"/>
</dbReference>
<dbReference type="PDB" id="5ADM">
    <property type="method" value="X-ray"/>
    <property type="resolution" value="2.20 A"/>
    <property type="chains" value="A/B=40-482"/>
</dbReference>
<dbReference type="PDB" id="5ADN">
    <property type="method" value="X-ray"/>
    <property type="resolution" value="2.00 A"/>
    <property type="chains" value="A/B=40-482"/>
</dbReference>
<dbReference type="PDB" id="5FJ2">
    <property type="method" value="X-ray"/>
    <property type="resolution" value="2.05 A"/>
    <property type="chains" value="A/B=40-482"/>
</dbReference>
<dbReference type="PDB" id="5FJ3">
    <property type="method" value="X-ray"/>
    <property type="resolution" value="2.20 A"/>
    <property type="chains" value="A/B=40-482"/>
</dbReference>
<dbReference type="PDB" id="5FVY">
    <property type="method" value="X-ray"/>
    <property type="resolution" value="2.10 A"/>
    <property type="chains" value="A/B=40-482"/>
</dbReference>
<dbReference type="PDB" id="5FVZ">
    <property type="method" value="X-ray"/>
    <property type="resolution" value="2.05 A"/>
    <property type="chains" value="A/B=40-482"/>
</dbReference>
<dbReference type="PDB" id="5NSE">
    <property type="method" value="X-ray"/>
    <property type="resolution" value="1.90 A"/>
    <property type="chains" value="A/B=39-482"/>
</dbReference>
<dbReference type="PDB" id="5UOD">
    <property type="method" value="X-ray"/>
    <property type="resolution" value="2.01 A"/>
    <property type="chains" value="A/B=40-482"/>
</dbReference>
<dbReference type="PDB" id="5VV6">
    <property type="method" value="X-ray"/>
    <property type="resolution" value="2.00 A"/>
    <property type="chains" value="A/B=40-482"/>
</dbReference>
<dbReference type="PDB" id="5VV7">
    <property type="method" value="X-ray"/>
    <property type="resolution" value="2.20 A"/>
    <property type="chains" value="A/B=40-482"/>
</dbReference>
<dbReference type="PDB" id="5VV8">
    <property type="method" value="X-ray"/>
    <property type="resolution" value="2.15 A"/>
    <property type="chains" value="A/B=40-482"/>
</dbReference>
<dbReference type="PDB" id="5VV9">
    <property type="method" value="X-ray"/>
    <property type="resolution" value="2.50 A"/>
    <property type="chains" value="A/B=40-482"/>
</dbReference>
<dbReference type="PDB" id="5VVA">
    <property type="method" value="X-ray"/>
    <property type="resolution" value="2.55 A"/>
    <property type="chains" value="A/B=40-482"/>
</dbReference>
<dbReference type="PDB" id="5VVG">
    <property type="method" value="X-ray"/>
    <property type="resolution" value="2.30 A"/>
    <property type="chains" value="A/B=40-482"/>
</dbReference>
<dbReference type="PDB" id="5VVN">
    <property type="method" value="X-ray"/>
    <property type="resolution" value="2.40 A"/>
    <property type="chains" value="A/B=40-482"/>
</dbReference>
<dbReference type="PDB" id="6NSE">
    <property type="method" value="X-ray"/>
    <property type="resolution" value="2.35 A"/>
    <property type="chains" value="A/B=39-482"/>
</dbReference>
<dbReference type="PDB" id="7NSE">
    <property type="method" value="X-ray"/>
    <property type="resolution" value="2.35 A"/>
    <property type="chains" value="A/B=39-482"/>
</dbReference>
<dbReference type="PDB" id="8NSE">
    <property type="method" value="X-ray"/>
    <property type="resolution" value="2.25 A"/>
    <property type="chains" value="A/B=39-482"/>
</dbReference>
<dbReference type="PDB" id="9NSE">
    <property type="method" value="X-ray"/>
    <property type="resolution" value="2.24 A"/>
    <property type="chains" value="A/B=39-482"/>
</dbReference>
<dbReference type="PDBsum" id="1D0C"/>
<dbReference type="PDBsum" id="1D0O"/>
<dbReference type="PDBsum" id="1D1V"/>
<dbReference type="PDBsum" id="1D1W"/>
<dbReference type="PDBsum" id="1D1X"/>
<dbReference type="PDBsum" id="1D1Y"/>
<dbReference type="PDBsum" id="1DM6"/>
<dbReference type="PDBsum" id="1DM7"/>
<dbReference type="PDBsum" id="1DM8"/>
<dbReference type="PDBsum" id="1DMI"/>
<dbReference type="PDBsum" id="1DMJ"/>
<dbReference type="PDBsum" id="1DMK"/>
<dbReference type="PDBsum" id="1ED4"/>
<dbReference type="PDBsum" id="1ED5"/>
<dbReference type="PDBsum" id="1ED6"/>
<dbReference type="PDBsum" id="1FOI"/>
<dbReference type="PDBsum" id="1FOJ"/>
<dbReference type="PDBsum" id="1FOL"/>
<dbReference type="PDBsum" id="1FOO"/>
<dbReference type="PDBsum" id="1FOP"/>
<dbReference type="PDBsum" id="1I83"/>
<dbReference type="PDBsum" id="1NSE"/>
<dbReference type="PDBsum" id="1P6L"/>
<dbReference type="PDBsum" id="1P6M"/>
<dbReference type="PDBsum" id="1P6N"/>
<dbReference type="PDBsum" id="1Q2O"/>
<dbReference type="PDBsum" id="1RS8"/>
<dbReference type="PDBsum" id="1RS9"/>
<dbReference type="PDBsum" id="1ZZS"/>
<dbReference type="PDBsum" id="1ZZT"/>
<dbReference type="PDBsum" id="2G6O"/>
<dbReference type="PDBsum" id="2HX2"/>
<dbReference type="PDBsum" id="2NSE"/>
<dbReference type="PDBsum" id="3DQS"/>
<dbReference type="PDBsum" id="3DQT"/>
<dbReference type="PDBsum" id="3E7S"/>
<dbReference type="PDBsum" id="3JWW"/>
<dbReference type="PDBsum" id="3JWX"/>
<dbReference type="PDBsum" id="3JWY"/>
<dbReference type="PDBsum" id="3JWZ"/>
<dbReference type="PDBsum" id="3N5P"/>
<dbReference type="PDBsum" id="3N5Q"/>
<dbReference type="PDBsum" id="3N5R"/>
<dbReference type="PDBsum" id="3N5S"/>
<dbReference type="PDBsum" id="3N5T"/>
<dbReference type="PDBsum" id="3NLD"/>
<dbReference type="PDBsum" id="3NLE"/>
<dbReference type="PDBsum" id="3NLF"/>
<dbReference type="PDBsum" id="3NLG"/>
<dbReference type="PDBsum" id="3NLH"/>
<dbReference type="PDBsum" id="3NLI"/>
<dbReference type="PDBsum" id="3NLT"/>
<dbReference type="PDBsum" id="3NLU"/>
<dbReference type="PDBsum" id="3NSE"/>
<dbReference type="PDBsum" id="3PNH"/>
<dbReference type="PDBsum" id="3RQO"/>
<dbReference type="PDBsum" id="3RQP"/>
<dbReference type="PDBsum" id="4C3A"/>
<dbReference type="PDBsum" id="4CAR"/>
<dbReference type="PDBsum" id="4CFT"/>
<dbReference type="PDBsum" id="4CTY"/>
<dbReference type="PDBsum" id="4CTZ"/>
<dbReference type="PDBsum" id="4CU0"/>
<dbReference type="PDBsum" id="4CU1"/>
<dbReference type="PDBsum" id="4CUL"/>
<dbReference type="PDBsum" id="4CUM"/>
<dbReference type="PDBsum" id="4CUN"/>
<dbReference type="PDBsum" id="4CVG"/>
<dbReference type="PDBsum" id="4CWV"/>
<dbReference type="PDBsum" id="4CWW"/>
<dbReference type="PDBsum" id="4CWX"/>
<dbReference type="PDBsum" id="4CWY"/>
<dbReference type="PDBsum" id="4CWZ"/>
<dbReference type="PDBsum" id="4CX0"/>
<dbReference type="PDBsum" id="4CX1"/>
<dbReference type="PDBsum" id="4CX2"/>
<dbReference type="PDBsum" id="4D33"/>
<dbReference type="PDBsum" id="4D34"/>
<dbReference type="PDBsum" id="4D35"/>
<dbReference type="PDBsum" id="4D36"/>
<dbReference type="PDBsum" id="4D37"/>
<dbReference type="PDBsum" id="4D38"/>
<dbReference type="PDBsum" id="4D39"/>
<dbReference type="PDBsum" id="4D3A"/>
<dbReference type="PDBsum" id="4IMX"/>
<dbReference type="PDBsum" id="4JSK"/>
<dbReference type="PDBsum" id="4JSL"/>
<dbReference type="PDBsum" id="4JSM"/>
<dbReference type="PDBsum" id="4K5H"/>
<dbReference type="PDBsum" id="4K5I"/>
<dbReference type="PDBsum" id="4K5J"/>
<dbReference type="PDBsum" id="4K5K"/>
<dbReference type="PDBsum" id="4KCP"/>
<dbReference type="PDBsum" id="4KCQ"/>
<dbReference type="PDBsum" id="4KCR"/>
<dbReference type="PDBsum" id="4KCS"/>
<dbReference type="PDBsum" id="4LUW"/>
<dbReference type="PDBsum" id="4NSE"/>
<dbReference type="PDBsum" id="4UH7"/>
<dbReference type="PDBsum" id="4UH8"/>
<dbReference type="PDBsum" id="4UH9"/>
<dbReference type="PDBsum" id="4UHA"/>
<dbReference type="PDBsum" id="4UPQ"/>
<dbReference type="PDBsum" id="4UPR"/>
<dbReference type="PDBsum" id="4UPS"/>
<dbReference type="PDBsum" id="4UPT"/>
<dbReference type="PDBsum" id="5ADJ"/>
<dbReference type="PDBsum" id="5ADK"/>
<dbReference type="PDBsum" id="5ADL"/>
<dbReference type="PDBsum" id="5ADM"/>
<dbReference type="PDBsum" id="5ADN"/>
<dbReference type="PDBsum" id="5FJ2"/>
<dbReference type="PDBsum" id="5FJ3"/>
<dbReference type="PDBsum" id="5FVY"/>
<dbReference type="PDBsum" id="5FVZ"/>
<dbReference type="PDBsum" id="5NSE"/>
<dbReference type="PDBsum" id="5UOD"/>
<dbReference type="PDBsum" id="5VV6"/>
<dbReference type="PDBsum" id="5VV7"/>
<dbReference type="PDBsum" id="5VV8"/>
<dbReference type="PDBsum" id="5VV9"/>
<dbReference type="PDBsum" id="5VVA"/>
<dbReference type="PDBsum" id="5VVG"/>
<dbReference type="PDBsum" id="5VVN"/>
<dbReference type="PDBsum" id="6NSE"/>
<dbReference type="PDBsum" id="7NSE"/>
<dbReference type="PDBsum" id="8NSE"/>
<dbReference type="PDBsum" id="9NSE"/>
<dbReference type="BMRB" id="P29473"/>
<dbReference type="SMR" id="P29473"/>
<dbReference type="CORUM" id="P29473"/>
<dbReference type="DIP" id="DIP-42217N"/>
<dbReference type="ELM" id="P29473"/>
<dbReference type="FunCoup" id="P29473">
    <property type="interactions" value="147"/>
</dbReference>
<dbReference type="IntAct" id="P29473">
    <property type="interactions" value="2"/>
</dbReference>
<dbReference type="MINT" id="P29473"/>
<dbReference type="STRING" id="9913.ENSBTAP00000063257"/>
<dbReference type="BindingDB" id="P29473"/>
<dbReference type="ChEMBL" id="CHEMBL4802"/>
<dbReference type="GlyGen" id="P29473">
    <property type="glycosylation" value="1 site, 1 O-linked glycan (1 site)"/>
</dbReference>
<dbReference type="iPTMnet" id="P29473"/>
<dbReference type="SwissPalm" id="P29473"/>
<dbReference type="PaxDb" id="9913-ENSBTAP00000023515"/>
<dbReference type="eggNOG" id="KOG1158">
    <property type="taxonomic scope" value="Eukaryota"/>
</dbReference>
<dbReference type="InParanoid" id="P29473"/>
<dbReference type="OrthoDB" id="1856718at2759"/>
<dbReference type="BRENDA" id="1.14.13.39">
    <property type="organism ID" value="908"/>
</dbReference>
<dbReference type="EvolutionaryTrace" id="P29473"/>
<dbReference type="Proteomes" id="UP000009136">
    <property type="component" value="Unplaced"/>
</dbReference>
<dbReference type="GO" id="GO:0005901">
    <property type="term" value="C:caveola"/>
    <property type="evidence" value="ECO:0007669"/>
    <property type="project" value="UniProtKB-SubCell"/>
</dbReference>
<dbReference type="GO" id="GO:0005856">
    <property type="term" value="C:cytoskeleton"/>
    <property type="evidence" value="ECO:0007669"/>
    <property type="project" value="UniProtKB-SubCell"/>
</dbReference>
<dbReference type="GO" id="GO:0005829">
    <property type="term" value="C:cytosol"/>
    <property type="evidence" value="ECO:0000318"/>
    <property type="project" value="GO_Central"/>
</dbReference>
<dbReference type="GO" id="GO:0005794">
    <property type="term" value="C:Golgi apparatus"/>
    <property type="evidence" value="ECO:0000314"/>
    <property type="project" value="BHF-UCL"/>
</dbReference>
<dbReference type="GO" id="GO:0005634">
    <property type="term" value="C:nucleus"/>
    <property type="evidence" value="ECO:0000318"/>
    <property type="project" value="GO_Central"/>
</dbReference>
<dbReference type="GO" id="GO:0005886">
    <property type="term" value="C:plasma membrane"/>
    <property type="evidence" value="ECO:0000318"/>
    <property type="project" value="GO_Central"/>
</dbReference>
<dbReference type="GO" id="GO:0005516">
    <property type="term" value="F:calmodulin binding"/>
    <property type="evidence" value="ECO:0007669"/>
    <property type="project" value="UniProtKB-KW"/>
</dbReference>
<dbReference type="GO" id="GO:0050660">
    <property type="term" value="F:flavin adenine dinucleotide binding"/>
    <property type="evidence" value="ECO:0000318"/>
    <property type="project" value="GO_Central"/>
</dbReference>
<dbReference type="GO" id="GO:0010181">
    <property type="term" value="F:FMN binding"/>
    <property type="evidence" value="ECO:0000318"/>
    <property type="project" value="GO_Central"/>
</dbReference>
<dbReference type="GO" id="GO:0020037">
    <property type="term" value="F:heme binding"/>
    <property type="evidence" value="ECO:0007669"/>
    <property type="project" value="InterPro"/>
</dbReference>
<dbReference type="GO" id="GO:0046872">
    <property type="term" value="F:metal ion binding"/>
    <property type="evidence" value="ECO:0007669"/>
    <property type="project" value="UniProtKB-KW"/>
</dbReference>
<dbReference type="GO" id="GO:0050661">
    <property type="term" value="F:NADP binding"/>
    <property type="evidence" value="ECO:0007669"/>
    <property type="project" value="InterPro"/>
</dbReference>
<dbReference type="GO" id="GO:0004517">
    <property type="term" value="F:nitric-oxide synthase activity"/>
    <property type="evidence" value="ECO:0000314"/>
    <property type="project" value="BHF-UCL"/>
</dbReference>
<dbReference type="GO" id="GO:0006527">
    <property type="term" value="P:arginine catabolic process"/>
    <property type="evidence" value="ECO:0000314"/>
    <property type="project" value="BHF-UCL"/>
</dbReference>
<dbReference type="GO" id="GO:0007596">
    <property type="term" value="P:blood coagulation"/>
    <property type="evidence" value="ECO:0007669"/>
    <property type="project" value="UniProtKB-KW"/>
</dbReference>
<dbReference type="GO" id="GO:0071499">
    <property type="term" value="P:cellular response to laminar fluid shear stress"/>
    <property type="evidence" value="ECO:0000315"/>
    <property type="project" value="BHF-UCL"/>
</dbReference>
<dbReference type="GO" id="GO:0007005">
    <property type="term" value="P:mitochondrion organization"/>
    <property type="evidence" value="ECO:0000315"/>
    <property type="project" value="BHF-UCL"/>
</dbReference>
<dbReference type="GO" id="GO:0045776">
    <property type="term" value="P:negative regulation of blood pressure"/>
    <property type="evidence" value="ECO:0000318"/>
    <property type="project" value="GO_Central"/>
</dbReference>
<dbReference type="GO" id="GO:1902042">
    <property type="term" value="P:negative regulation of extrinsic apoptotic signaling pathway via death domain receptors"/>
    <property type="evidence" value="ECO:0000315"/>
    <property type="project" value="BHF-UCL"/>
</dbReference>
<dbReference type="GO" id="GO:1903038">
    <property type="term" value="P:negative regulation of leukocyte cell-cell adhesion"/>
    <property type="evidence" value="ECO:0000315"/>
    <property type="project" value="BHF-UCL"/>
</dbReference>
<dbReference type="GO" id="GO:0006809">
    <property type="term" value="P:nitric oxide biosynthetic process"/>
    <property type="evidence" value="ECO:0000314"/>
    <property type="project" value="BHF-UCL"/>
</dbReference>
<dbReference type="GO" id="GO:0007263">
    <property type="term" value="P:nitric oxide mediated signal transduction"/>
    <property type="evidence" value="ECO:0000318"/>
    <property type="project" value="GO_Central"/>
</dbReference>
<dbReference type="GO" id="GO:0009725">
    <property type="term" value="P:response to hormone"/>
    <property type="evidence" value="ECO:0000318"/>
    <property type="project" value="GO_Central"/>
</dbReference>
<dbReference type="GO" id="GO:0032496">
    <property type="term" value="P:response to lipopolysaccharide"/>
    <property type="evidence" value="ECO:0000318"/>
    <property type="project" value="GO_Central"/>
</dbReference>
<dbReference type="CDD" id="cd00795">
    <property type="entry name" value="NOS_oxygenase_euk"/>
    <property type="match status" value="1"/>
</dbReference>
<dbReference type="FunFam" id="3.90.440.10:FF:000001">
    <property type="entry name" value="Endothelial nitric oxide synthase"/>
    <property type="match status" value="1"/>
</dbReference>
<dbReference type="FunFam" id="1.20.990.10:FF:000005">
    <property type="entry name" value="Nitric oxide synthase"/>
    <property type="match status" value="1"/>
</dbReference>
<dbReference type="FunFam" id="3.40.50.360:FF:000003">
    <property type="entry name" value="Nitric oxide synthase"/>
    <property type="match status" value="1"/>
</dbReference>
<dbReference type="FunFam" id="3.40.50.80:FF:000003">
    <property type="entry name" value="Nitric oxide synthase"/>
    <property type="match status" value="1"/>
</dbReference>
<dbReference type="Gene3D" id="3.40.50.360">
    <property type="match status" value="1"/>
</dbReference>
<dbReference type="Gene3D" id="1.20.990.10">
    <property type="entry name" value="NADPH-cytochrome p450 Reductase, Chain A, domain 3"/>
    <property type="match status" value="1"/>
</dbReference>
<dbReference type="Gene3D" id="3.90.340.10">
    <property type="entry name" value="Nitric Oxide Synthase, Chain A, domain 1"/>
    <property type="match status" value="1"/>
</dbReference>
<dbReference type="Gene3D" id="3.90.1230.10">
    <property type="entry name" value="Nitric Oxide Synthase, Chain A, domain 3"/>
    <property type="match status" value="1"/>
</dbReference>
<dbReference type="Gene3D" id="3.90.440.10">
    <property type="entry name" value="Nitric Oxide Synthase,Heme Domain,Chain A domain 2"/>
    <property type="match status" value="1"/>
</dbReference>
<dbReference type="Gene3D" id="3.40.50.80">
    <property type="entry name" value="Nucleotide-binding domain of ferredoxin-NADP reductase (FNR) module"/>
    <property type="match status" value="1"/>
</dbReference>
<dbReference type="Gene3D" id="2.40.30.10">
    <property type="entry name" value="Translation factors"/>
    <property type="match status" value="1"/>
</dbReference>
<dbReference type="InterPro" id="IPR003097">
    <property type="entry name" value="CysJ-like_FAD-binding"/>
</dbReference>
<dbReference type="InterPro" id="IPR017927">
    <property type="entry name" value="FAD-bd_FR_type"/>
</dbReference>
<dbReference type="InterPro" id="IPR001094">
    <property type="entry name" value="Flavdoxin-like"/>
</dbReference>
<dbReference type="InterPro" id="IPR008254">
    <property type="entry name" value="Flavodoxin/NO_synth"/>
</dbReference>
<dbReference type="InterPro" id="IPR001709">
    <property type="entry name" value="Flavoprot_Pyr_Nucl_cyt_Rdtase"/>
</dbReference>
<dbReference type="InterPro" id="IPR029039">
    <property type="entry name" value="Flavoprotein-like_sf"/>
</dbReference>
<dbReference type="InterPro" id="IPR039261">
    <property type="entry name" value="FNR_nucleotide-bd"/>
</dbReference>
<dbReference type="InterPro" id="IPR023173">
    <property type="entry name" value="NADPH_Cyt_P450_Rdtase_alpha"/>
</dbReference>
<dbReference type="InterPro" id="IPR050607">
    <property type="entry name" value="NOS"/>
</dbReference>
<dbReference type="InterPro" id="IPR044943">
    <property type="entry name" value="NOS_dom_1"/>
</dbReference>
<dbReference type="InterPro" id="IPR044940">
    <property type="entry name" value="NOS_dom_2"/>
</dbReference>
<dbReference type="InterPro" id="IPR044944">
    <property type="entry name" value="NOS_dom_3"/>
</dbReference>
<dbReference type="InterPro" id="IPR012144">
    <property type="entry name" value="NOS_euk"/>
</dbReference>
<dbReference type="InterPro" id="IPR004030">
    <property type="entry name" value="NOS_N"/>
</dbReference>
<dbReference type="InterPro" id="IPR036119">
    <property type="entry name" value="NOS_N_sf"/>
</dbReference>
<dbReference type="InterPro" id="IPR001433">
    <property type="entry name" value="OxRdtase_FAD/NAD-bd"/>
</dbReference>
<dbReference type="InterPro" id="IPR017938">
    <property type="entry name" value="Riboflavin_synthase-like_b-brl"/>
</dbReference>
<dbReference type="PANTHER" id="PTHR43410:SF1">
    <property type="entry name" value="NITRIC OXIDE SYNTHASE"/>
    <property type="match status" value="1"/>
</dbReference>
<dbReference type="PANTHER" id="PTHR43410">
    <property type="entry name" value="NITRIC OXIDE SYNTHASE OXYGENASE"/>
    <property type="match status" value="1"/>
</dbReference>
<dbReference type="Pfam" id="PF00667">
    <property type="entry name" value="FAD_binding_1"/>
    <property type="match status" value="1"/>
</dbReference>
<dbReference type="Pfam" id="PF00258">
    <property type="entry name" value="Flavodoxin_1"/>
    <property type="match status" value="1"/>
</dbReference>
<dbReference type="Pfam" id="PF00175">
    <property type="entry name" value="NAD_binding_1"/>
    <property type="match status" value="1"/>
</dbReference>
<dbReference type="Pfam" id="PF02898">
    <property type="entry name" value="NO_synthase"/>
    <property type="match status" value="1"/>
</dbReference>
<dbReference type="PIRSF" id="PIRSF000333">
    <property type="entry name" value="NOS"/>
    <property type="match status" value="1"/>
</dbReference>
<dbReference type="PRINTS" id="PR00369">
    <property type="entry name" value="FLAVODOXIN"/>
</dbReference>
<dbReference type="PRINTS" id="PR00371">
    <property type="entry name" value="FPNCR"/>
</dbReference>
<dbReference type="SUPFAM" id="SSF52343">
    <property type="entry name" value="Ferredoxin reductase-like, C-terminal NADP-linked domain"/>
    <property type="match status" value="1"/>
</dbReference>
<dbReference type="SUPFAM" id="SSF52218">
    <property type="entry name" value="Flavoproteins"/>
    <property type="match status" value="1"/>
</dbReference>
<dbReference type="SUPFAM" id="SSF56512">
    <property type="entry name" value="Nitric oxide (NO) synthase oxygenase domain"/>
    <property type="match status" value="1"/>
</dbReference>
<dbReference type="SUPFAM" id="SSF63380">
    <property type="entry name" value="Riboflavin synthase domain-like"/>
    <property type="match status" value="1"/>
</dbReference>
<dbReference type="PROSITE" id="PS51384">
    <property type="entry name" value="FAD_FR"/>
    <property type="match status" value="1"/>
</dbReference>
<dbReference type="PROSITE" id="PS50902">
    <property type="entry name" value="FLAVODOXIN_LIKE"/>
    <property type="match status" value="1"/>
</dbReference>
<dbReference type="PROSITE" id="PS60001">
    <property type="entry name" value="NOS"/>
    <property type="match status" value="1"/>
</dbReference>
<proteinExistence type="evidence at protein level"/>
<evidence type="ECO:0000250" key="1"/>
<evidence type="ECO:0000250" key="2">
    <source>
        <dbReference type="UniProtKB" id="P29474"/>
    </source>
</evidence>
<evidence type="ECO:0000250" key="3">
    <source>
        <dbReference type="UniProtKB" id="P29476"/>
    </source>
</evidence>
<evidence type="ECO:0000250" key="4">
    <source>
        <dbReference type="UniProtKB" id="P35228"/>
    </source>
</evidence>
<evidence type="ECO:0000250" key="5">
    <source>
        <dbReference type="UniProtKB" id="P70313"/>
    </source>
</evidence>
<evidence type="ECO:0000255" key="6"/>
<evidence type="ECO:0000255" key="7">
    <source>
        <dbReference type="PROSITE-ProRule" id="PRU00088"/>
    </source>
</evidence>
<evidence type="ECO:0000255" key="8">
    <source>
        <dbReference type="PROSITE-ProRule" id="PRU00716"/>
    </source>
</evidence>
<evidence type="ECO:0000256" key="9">
    <source>
        <dbReference type="SAM" id="MobiDB-lite"/>
    </source>
</evidence>
<evidence type="ECO:0000269" key="10">
    <source>
    </source>
</evidence>
<evidence type="ECO:0000269" key="11">
    <source>
    </source>
</evidence>
<evidence type="ECO:0000269" key="12">
    <source>
    </source>
</evidence>
<evidence type="ECO:0000269" key="13">
    <source>
    </source>
</evidence>
<evidence type="ECO:0000269" key="14">
    <source>
    </source>
</evidence>
<evidence type="ECO:0000269" key="15">
    <source>
    </source>
</evidence>
<evidence type="ECO:0000269" key="16">
    <source>
    </source>
</evidence>
<evidence type="ECO:0000305" key="17"/>
<evidence type="ECO:0000305" key="18">
    <source>
    </source>
</evidence>
<evidence type="ECO:0007744" key="19">
    <source>
        <dbReference type="PDB" id="1D0C"/>
    </source>
</evidence>
<evidence type="ECO:0007744" key="20">
    <source>
        <dbReference type="PDB" id="1D0O"/>
    </source>
</evidence>
<evidence type="ECO:0007744" key="21">
    <source>
        <dbReference type="PDB" id="1D1V"/>
    </source>
</evidence>
<evidence type="ECO:0007744" key="22">
    <source>
        <dbReference type="PDB" id="1D1W"/>
    </source>
</evidence>
<evidence type="ECO:0007744" key="23">
    <source>
        <dbReference type="PDB" id="1D1X"/>
    </source>
</evidence>
<evidence type="ECO:0007744" key="24">
    <source>
        <dbReference type="PDB" id="1D1Y"/>
    </source>
</evidence>
<evidence type="ECO:0007744" key="25">
    <source>
        <dbReference type="PDB" id="1DM6"/>
    </source>
</evidence>
<evidence type="ECO:0007744" key="26">
    <source>
        <dbReference type="PDB" id="1DMJ"/>
    </source>
</evidence>
<evidence type="ECO:0007744" key="27">
    <source>
        <dbReference type="PDB" id="1DMK"/>
    </source>
</evidence>
<evidence type="ECO:0007744" key="28">
    <source>
        <dbReference type="PDB" id="1ED4"/>
    </source>
</evidence>
<evidence type="ECO:0007744" key="29">
    <source>
        <dbReference type="PDB" id="1ED5"/>
    </source>
</evidence>
<evidence type="ECO:0007744" key="30">
    <source>
        <dbReference type="PDB" id="1ED6"/>
    </source>
</evidence>
<evidence type="ECO:0007744" key="31">
    <source>
        <dbReference type="PDB" id="1FOI"/>
    </source>
</evidence>
<evidence type="ECO:0007744" key="32">
    <source>
        <dbReference type="PDB" id="1FOJ"/>
    </source>
</evidence>
<evidence type="ECO:0007744" key="33">
    <source>
        <dbReference type="PDB" id="1FOL"/>
    </source>
</evidence>
<evidence type="ECO:0007744" key="34">
    <source>
        <dbReference type="PDB" id="1FOO"/>
    </source>
</evidence>
<evidence type="ECO:0007744" key="35">
    <source>
        <dbReference type="PDB" id="1FOP"/>
    </source>
</evidence>
<evidence type="ECO:0007744" key="36">
    <source>
        <dbReference type="PDB" id="1I83"/>
    </source>
</evidence>
<evidence type="ECO:0007744" key="37">
    <source>
        <dbReference type="PDB" id="1NSE"/>
    </source>
</evidence>
<evidence type="ECO:0007744" key="38">
    <source>
        <dbReference type="PDB" id="2NSE"/>
    </source>
</evidence>
<evidence type="ECO:0007744" key="39">
    <source>
        <dbReference type="PDB" id="3NSE"/>
    </source>
</evidence>
<evidence type="ECO:0007744" key="40">
    <source>
        <dbReference type="PDB" id="4NSE"/>
    </source>
</evidence>
<evidence type="ECO:0007744" key="41">
    <source>
        <dbReference type="PDB" id="8NSE"/>
    </source>
</evidence>
<evidence type="ECO:0007744" key="42">
    <source>
        <dbReference type="PDB" id="9NSE"/>
    </source>
</evidence>
<evidence type="ECO:0007829" key="43">
    <source>
        <dbReference type="PDB" id="1D0C"/>
    </source>
</evidence>
<evidence type="ECO:0007829" key="44">
    <source>
        <dbReference type="PDB" id="1DMK"/>
    </source>
</evidence>
<evidence type="ECO:0007829" key="45">
    <source>
        <dbReference type="PDB" id="3E7S"/>
    </source>
</evidence>
<evidence type="ECO:0007829" key="46">
    <source>
        <dbReference type="PDB" id="4CFT"/>
    </source>
</evidence>
<evidence type="ECO:0007829" key="47">
    <source>
        <dbReference type="PDB" id="4NSE"/>
    </source>
</evidence>
<evidence type="ECO:0007829" key="48">
    <source>
        <dbReference type="PDB" id="8NSE"/>
    </source>
</evidence>